<evidence type="ECO:0000250" key="1">
    <source>
        <dbReference type="UniProtKB" id="Q9BW71"/>
    </source>
</evidence>
<evidence type="ECO:0000256" key="2">
    <source>
        <dbReference type="SAM" id="MobiDB-lite"/>
    </source>
</evidence>
<evidence type="ECO:0000312" key="3">
    <source>
        <dbReference type="EMBL" id="AAH55687.1"/>
    </source>
</evidence>
<evidence type="ECO:0000312" key="4">
    <source>
        <dbReference type="EMBL" id="BAC32232.1"/>
    </source>
</evidence>
<evidence type="ECO:0000312" key="5">
    <source>
        <dbReference type="EMBL" id="BAE36722.1"/>
    </source>
</evidence>
<evidence type="ECO:0000312" key="6">
    <source>
        <dbReference type="EMBL" id="EDL17468.1"/>
    </source>
</evidence>
<evidence type="ECO:0000312" key="7">
    <source>
        <dbReference type="MGI" id="MGI:2142364"/>
    </source>
</evidence>
<evidence type="ECO:0007744" key="8">
    <source>
    </source>
</evidence>
<evidence type="ECO:0007744" key="9">
    <source>
    </source>
</evidence>
<evidence type="ECO:0007744" key="10">
    <source>
    </source>
</evidence>
<keyword id="KW-0143">Chaperone</keyword>
<keyword id="KW-0156">Chromatin regulator</keyword>
<keyword id="KW-0539">Nucleus</keyword>
<keyword id="KW-0597">Phosphoprotein</keyword>
<keyword id="KW-1185">Reference proteome</keyword>
<comment type="function">
    <text evidence="1">Histone chaperone that carries a H2A-H2B histone complex and facilitates its deposition onto chromatin.</text>
</comment>
<comment type="subunit">
    <text evidence="1">Interacts (via C-terminus) with histone H2A-H2B dimers; the interaction is direct. Interacts with HIRA. Interacts with CK2.</text>
</comment>
<comment type="subcellular location">
    <subcellularLocation>
        <location evidence="1">Nucleus</location>
    </subcellularLocation>
    <text evidence="1">Nuclear throughout the cell cycle and is excluded from condensed chromatin during mitosis.</text>
</comment>
<comment type="PTM">
    <text evidence="1">Phosphorylated by CK2.</text>
</comment>
<name>HIRP3_MOUSE</name>
<dbReference type="EMBL" id="AK045122">
    <property type="protein sequence ID" value="BAC32232.1"/>
    <property type="molecule type" value="mRNA"/>
</dbReference>
<dbReference type="EMBL" id="AK162096">
    <property type="protein sequence ID" value="BAE36722.1"/>
    <property type="molecule type" value="mRNA"/>
</dbReference>
<dbReference type="EMBL" id="CH466531">
    <property type="protein sequence ID" value="EDL17468.1"/>
    <property type="molecule type" value="Genomic_DNA"/>
</dbReference>
<dbReference type="EMBL" id="BC055687">
    <property type="protein sequence ID" value="AAH55687.1"/>
    <property type="molecule type" value="mRNA"/>
</dbReference>
<dbReference type="CCDS" id="CCDS21849.1"/>
<dbReference type="RefSeq" id="NP_766334.1">
    <property type="nucleotide sequence ID" value="NM_172746.4"/>
</dbReference>
<dbReference type="SMR" id="Q8BLH7"/>
<dbReference type="BioGRID" id="231462">
    <property type="interactions" value="3"/>
</dbReference>
<dbReference type="FunCoup" id="Q8BLH7">
    <property type="interactions" value="2724"/>
</dbReference>
<dbReference type="STRING" id="10090.ENSMUSP00000035535"/>
<dbReference type="iPTMnet" id="Q8BLH7"/>
<dbReference type="PhosphoSitePlus" id="Q8BLH7"/>
<dbReference type="SwissPalm" id="Q8BLH7"/>
<dbReference type="jPOST" id="Q8BLH7"/>
<dbReference type="PaxDb" id="10090-ENSMUSP00000035535"/>
<dbReference type="PeptideAtlas" id="Q8BLH7"/>
<dbReference type="ProteomicsDB" id="273175"/>
<dbReference type="Pumba" id="Q8BLH7"/>
<dbReference type="Antibodypedia" id="26925">
    <property type="antibodies" value="196 antibodies from 28 providers"/>
</dbReference>
<dbReference type="DNASU" id="233876"/>
<dbReference type="Ensembl" id="ENSMUST00000037248.10">
    <property type="protein sequence ID" value="ENSMUSP00000035535.4"/>
    <property type="gene ID" value="ENSMUSG00000042606.10"/>
</dbReference>
<dbReference type="GeneID" id="233876"/>
<dbReference type="KEGG" id="mmu:233876"/>
<dbReference type="UCSC" id="uc012ftw.1">
    <property type="organism name" value="mouse"/>
</dbReference>
<dbReference type="AGR" id="MGI:2142364"/>
<dbReference type="CTD" id="8479"/>
<dbReference type="MGI" id="MGI:2142364">
    <property type="gene designation" value="Hirip3"/>
</dbReference>
<dbReference type="VEuPathDB" id="HostDB:ENSMUSG00000042606"/>
<dbReference type="eggNOG" id="ENOG502S0AG">
    <property type="taxonomic scope" value="Eukaryota"/>
</dbReference>
<dbReference type="GeneTree" id="ENSGT00390000014062"/>
<dbReference type="HOGENOM" id="CLU_038583_0_0_1"/>
<dbReference type="InParanoid" id="Q8BLH7"/>
<dbReference type="OMA" id="NEMQEFT"/>
<dbReference type="OrthoDB" id="552755at2759"/>
<dbReference type="PhylomeDB" id="Q8BLH7"/>
<dbReference type="TreeFam" id="TF331753"/>
<dbReference type="BioGRID-ORCS" id="233876">
    <property type="hits" value="8 hits in 79 CRISPR screens"/>
</dbReference>
<dbReference type="ChiTaRS" id="Hirip3">
    <property type="organism name" value="mouse"/>
</dbReference>
<dbReference type="PRO" id="PR:Q8BLH7"/>
<dbReference type="Proteomes" id="UP000000589">
    <property type="component" value="Chromosome 7"/>
</dbReference>
<dbReference type="RNAct" id="Q8BLH7">
    <property type="molecule type" value="protein"/>
</dbReference>
<dbReference type="Bgee" id="ENSMUSG00000042606">
    <property type="expression patterns" value="Expressed in animal zygote and 222 other cell types or tissues"/>
</dbReference>
<dbReference type="ExpressionAtlas" id="Q8BLH7">
    <property type="expression patterns" value="baseline and differential"/>
</dbReference>
<dbReference type="GO" id="GO:0005730">
    <property type="term" value="C:nucleolus"/>
    <property type="evidence" value="ECO:0007669"/>
    <property type="project" value="Ensembl"/>
</dbReference>
<dbReference type="GO" id="GO:0005654">
    <property type="term" value="C:nucleoplasm"/>
    <property type="evidence" value="ECO:0007669"/>
    <property type="project" value="Ensembl"/>
</dbReference>
<dbReference type="GO" id="GO:0005634">
    <property type="term" value="C:nucleus"/>
    <property type="evidence" value="ECO:0000250"/>
    <property type="project" value="UniProtKB"/>
</dbReference>
<dbReference type="GO" id="GO:0000511">
    <property type="term" value="F:H2A-H2B histone complex chaperone activity"/>
    <property type="evidence" value="ECO:0000250"/>
    <property type="project" value="UniProtKB"/>
</dbReference>
<dbReference type="GO" id="GO:0006325">
    <property type="term" value="P:chromatin organization"/>
    <property type="evidence" value="ECO:0000250"/>
    <property type="project" value="UniProtKB"/>
</dbReference>
<dbReference type="InterPro" id="IPR037647">
    <property type="entry name" value="HIRIP3"/>
</dbReference>
<dbReference type="InterPro" id="IPR019098">
    <property type="entry name" value="Histone_chaperone_domain_CHZ"/>
</dbReference>
<dbReference type="PANTHER" id="PTHR15410">
    <property type="entry name" value="HIRA-INTERACTING PROTEIN 3"/>
    <property type="match status" value="1"/>
</dbReference>
<dbReference type="PANTHER" id="PTHR15410:SF2">
    <property type="entry name" value="HIRA-INTERACTING PROTEIN 3"/>
    <property type="match status" value="1"/>
</dbReference>
<dbReference type="Pfam" id="PF09649">
    <property type="entry name" value="CHZ"/>
    <property type="match status" value="1"/>
</dbReference>
<dbReference type="SMART" id="SM01082">
    <property type="entry name" value="CHZ"/>
    <property type="match status" value="1"/>
</dbReference>
<organism>
    <name type="scientific">Mus musculus</name>
    <name type="common">Mouse</name>
    <dbReference type="NCBI Taxonomy" id="10090"/>
    <lineage>
        <taxon>Eukaryota</taxon>
        <taxon>Metazoa</taxon>
        <taxon>Chordata</taxon>
        <taxon>Craniata</taxon>
        <taxon>Vertebrata</taxon>
        <taxon>Euteleostomi</taxon>
        <taxon>Mammalia</taxon>
        <taxon>Eutheria</taxon>
        <taxon>Euarchontoglires</taxon>
        <taxon>Glires</taxon>
        <taxon>Rodentia</taxon>
        <taxon>Myomorpha</taxon>
        <taxon>Muroidea</taxon>
        <taxon>Muridae</taxon>
        <taxon>Murinae</taxon>
        <taxon>Mus</taxon>
        <taxon>Mus</taxon>
    </lineage>
</organism>
<proteinExistence type="evidence at protein level"/>
<reference evidence="4" key="1">
    <citation type="journal article" date="2005" name="Science">
        <title>The transcriptional landscape of the mammalian genome.</title>
        <authorList>
            <person name="Carninci P."/>
            <person name="Kasukawa T."/>
            <person name="Katayama S."/>
            <person name="Gough J."/>
            <person name="Frith M.C."/>
            <person name="Maeda N."/>
            <person name="Oyama R."/>
            <person name="Ravasi T."/>
            <person name="Lenhard B."/>
            <person name="Wells C."/>
            <person name="Kodzius R."/>
            <person name="Shimokawa K."/>
            <person name="Bajic V.B."/>
            <person name="Brenner S.E."/>
            <person name="Batalov S."/>
            <person name="Forrest A.R."/>
            <person name="Zavolan M."/>
            <person name="Davis M.J."/>
            <person name="Wilming L.G."/>
            <person name="Aidinis V."/>
            <person name="Allen J.E."/>
            <person name="Ambesi-Impiombato A."/>
            <person name="Apweiler R."/>
            <person name="Aturaliya R.N."/>
            <person name="Bailey T.L."/>
            <person name="Bansal M."/>
            <person name="Baxter L."/>
            <person name="Beisel K.W."/>
            <person name="Bersano T."/>
            <person name="Bono H."/>
            <person name="Chalk A.M."/>
            <person name="Chiu K.P."/>
            <person name="Choudhary V."/>
            <person name="Christoffels A."/>
            <person name="Clutterbuck D.R."/>
            <person name="Crowe M.L."/>
            <person name="Dalla E."/>
            <person name="Dalrymple B.P."/>
            <person name="de Bono B."/>
            <person name="Della Gatta G."/>
            <person name="di Bernardo D."/>
            <person name="Down T."/>
            <person name="Engstrom P."/>
            <person name="Fagiolini M."/>
            <person name="Faulkner G."/>
            <person name="Fletcher C.F."/>
            <person name="Fukushima T."/>
            <person name="Furuno M."/>
            <person name="Futaki S."/>
            <person name="Gariboldi M."/>
            <person name="Georgii-Hemming P."/>
            <person name="Gingeras T.R."/>
            <person name="Gojobori T."/>
            <person name="Green R.E."/>
            <person name="Gustincich S."/>
            <person name="Harbers M."/>
            <person name="Hayashi Y."/>
            <person name="Hensch T.K."/>
            <person name="Hirokawa N."/>
            <person name="Hill D."/>
            <person name="Huminiecki L."/>
            <person name="Iacono M."/>
            <person name="Ikeo K."/>
            <person name="Iwama A."/>
            <person name="Ishikawa T."/>
            <person name="Jakt M."/>
            <person name="Kanapin A."/>
            <person name="Katoh M."/>
            <person name="Kawasawa Y."/>
            <person name="Kelso J."/>
            <person name="Kitamura H."/>
            <person name="Kitano H."/>
            <person name="Kollias G."/>
            <person name="Krishnan S.P."/>
            <person name="Kruger A."/>
            <person name="Kummerfeld S.K."/>
            <person name="Kurochkin I.V."/>
            <person name="Lareau L.F."/>
            <person name="Lazarevic D."/>
            <person name="Lipovich L."/>
            <person name="Liu J."/>
            <person name="Liuni S."/>
            <person name="McWilliam S."/>
            <person name="Madan Babu M."/>
            <person name="Madera M."/>
            <person name="Marchionni L."/>
            <person name="Matsuda H."/>
            <person name="Matsuzawa S."/>
            <person name="Miki H."/>
            <person name="Mignone F."/>
            <person name="Miyake S."/>
            <person name="Morris K."/>
            <person name="Mottagui-Tabar S."/>
            <person name="Mulder N."/>
            <person name="Nakano N."/>
            <person name="Nakauchi H."/>
            <person name="Ng P."/>
            <person name="Nilsson R."/>
            <person name="Nishiguchi S."/>
            <person name="Nishikawa S."/>
            <person name="Nori F."/>
            <person name="Ohara O."/>
            <person name="Okazaki Y."/>
            <person name="Orlando V."/>
            <person name="Pang K.C."/>
            <person name="Pavan W.J."/>
            <person name="Pavesi G."/>
            <person name="Pesole G."/>
            <person name="Petrovsky N."/>
            <person name="Piazza S."/>
            <person name="Reed J."/>
            <person name="Reid J.F."/>
            <person name="Ring B.Z."/>
            <person name="Ringwald M."/>
            <person name="Rost B."/>
            <person name="Ruan Y."/>
            <person name="Salzberg S.L."/>
            <person name="Sandelin A."/>
            <person name="Schneider C."/>
            <person name="Schoenbach C."/>
            <person name="Sekiguchi K."/>
            <person name="Semple C.A."/>
            <person name="Seno S."/>
            <person name="Sessa L."/>
            <person name="Sheng Y."/>
            <person name="Shibata Y."/>
            <person name="Shimada H."/>
            <person name="Shimada K."/>
            <person name="Silva D."/>
            <person name="Sinclair B."/>
            <person name="Sperling S."/>
            <person name="Stupka E."/>
            <person name="Sugiura K."/>
            <person name="Sultana R."/>
            <person name="Takenaka Y."/>
            <person name="Taki K."/>
            <person name="Tammoja K."/>
            <person name="Tan S.L."/>
            <person name="Tang S."/>
            <person name="Taylor M.S."/>
            <person name="Tegner J."/>
            <person name="Teichmann S.A."/>
            <person name="Ueda H.R."/>
            <person name="van Nimwegen E."/>
            <person name="Verardo R."/>
            <person name="Wei C.L."/>
            <person name="Yagi K."/>
            <person name="Yamanishi H."/>
            <person name="Zabarovsky E."/>
            <person name="Zhu S."/>
            <person name="Zimmer A."/>
            <person name="Hide W."/>
            <person name="Bult C."/>
            <person name="Grimmond S.M."/>
            <person name="Teasdale R.D."/>
            <person name="Liu E.T."/>
            <person name="Brusic V."/>
            <person name="Quackenbush J."/>
            <person name="Wahlestedt C."/>
            <person name="Mattick J.S."/>
            <person name="Hume D.A."/>
            <person name="Kai C."/>
            <person name="Sasaki D."/>
            <person name="Tomaru Y."/>
            <person name="Fukuda S."/>
            <person name="Kanamori-Katayama M."/>
            <person name="Suzuki M."/>
            <person name="Aoki J."/>
            <person name="Arakawa T."/>
            <person name="Iida J."/>
            <person name="Imamura K."/>
            <person name="Itoh M."/>
            <person name="Kato T."/>
            <person name="Kawaji H."/>
            <person name="Kawagashira N."/>
            <person name="Kawashima T."/>
            <person name="Kojima M."/>
            <person name="Kondo S."/>
            <person name="Konno H."/>
            <person name="Nakano K."/>
            <person name="Ninomiya N."/>
            <person name="Nishio T."/>
            <person name="Okada M."/>
            <person name="Plessy C."/>
            <person name="Shibata K."/>
            <person name="Shiraki T."/>
            <person name="Suzuki S."/>
            <person name="Tagami M."/>
            <person name="Waki K."/>
            <person name="Watahiki A."/>
            <person name="Okamura-Oho Y."/>
            <person name="Suzuki H."/>
            <person name="Kawai J."/>
            <person name="Hayashizaki Y."/>
        </authorList>
    </citation>
    <scope>NUCLEOTIDE SEQUENCE [LARGE SCALE MRNA]</scope>
    <source>
        <strain evidence="4">C57BL/6J</strain>
        <tissue evidence="5">Egg</tissue>
        <tissue evidence="4">Embryo</tissue>
    </source>
</reference>
<reference evidence="6" key="2">
    <citation type="submission" date="2005-07" db="EMBL/GenBank/DDBJ databases">
        <authorList>
            <person name="Mural R.J."/>
            <person name="Adams M.D."/>
            <person name="Myers E.W."/>
            <person name="Smith H.O."/>
            <person name="Venter J.C."/>
        </authorList>
    </citation>
    <scope>NUCLEOTIDE SEQUENCE [LARGE SCALE GENOMIC DNA]</scope>
</reference>
<reference evidence="3" key="3">
    <citation type="journal article" date="2004" name="Genome Res.">
        <title>The status, quality, and expansion of the NIH full-length cDNA project: the Mammalian Gene Collection (MGC).</title>
        <authorList>
            <consortium name="The MGC Project Team"/>
        </authorList>
    </citation>
    <scope>NUCLEOTIDE SEQUENCE [LARGE SCALE MRNA]</scope>
    <source>
        <strain evidence="3">C57BL/6J</strain>
        <tissue evidence="3">Brain</tissue>
    </source>
</reference>
<reference key="4">
    <citation type="journal article" date="2007" name="J. Proteome Res.">
        <title>A differential phosphoproteomic analysis of retinoic acid-treated P19 cells.</title>
        <authorList>
            <person name="Smith J.C."/>
            <person name="Duchesne M.A."/>
            <person name="Tozzi P."/>
            <person name="Ethier M."/>
            <person name="Figeys D."/>
        </authorList>
    </citation>
    <scope>PHOSPHORYLATION [LARGE SCALE ANALYSIS] AT SER-205; SER-207 AND SER-208</scope>
    <scope>IDENTIFICATION BY MASS SPECTROMETRY [LARGE SCALE ANALYSIS]</scope>
    <source>
        <tissue>Teratocarcinoma</tissue>
    </source>
</reference>
<reference key="5">
    <citation type="journal article" date="2007" name="Proc. Natl. Acad. Sci. U.S.A.">
        <title>Large-scale phosphorylation analysis of mouse liver.</title>
        <authorList>
            <person name="Villen J."/>
            <person name="Beausoleil S.A."/>
            <person name="Gerber S.A."/>
            <person name="Gygi S.P."/>
        </authorList>
    </citation>
    <scope>PHOSPHORYLATION [LARGE SCALE ANALYSIS] AT THR-141; SER-231 AND SER-234</scope>
    <scope>IDENTIFICATION BY MASS SPECTROMETRY [LARGE SCALE ANALYSIS]</scope>
    <source>
        <tissue>Liver</tissue>
    </source>
</reference>
<reference key="6">
    <citation type="journal article" date="2010" name="Cell">
        <title>A tissue-specific atlas of mouse protein phosphorylation and expression.</title>
        <authorList>
            <person name="Huttlin E.L."/>
            <person name="Jedrychowski M.P."/>
            <person name="Elias J.E."/>
            <person name="Goswami T."/>
            <person name="Rad R."/>
            <person name="Beausoleil S.A."/>
            <person name="Villen J."/>
            <person name="Haas W."/>
            <person name="Sowa M.E."/>
            <person name="Gygi S.P."/>
        </authorList>
    </citation>
    <scope>PHOSPHORYLATION [LARGE SCALE ANALYSIS] AT SER-134; THR-135; THR-141; SER-152; SER-153; SER-163; THR-167; SER-231; SER-234; SER-238; SER-389; THR-391; SER-564 AND SER-575</scope>
    <scope>IDENTIFICATION BY MASS SPECTROMETRY [LARGE SCALE ANALYSIS]</scope>
    <source>
        <tissue>Brain</tissue>
        <tissue>Brown adipose tissue</tissue>
        <tissue>Kidney</tissue>
        <tissue>Liver</tissue>
        <tissue>Lung</tissue>
        <tissue>Pancreas</tissue>
        <tissue>Spleen</tissue>
        <tissue>Testis</tissue>
    </source>
</reference>
<feature type="chain" id="PRO_0000367046" description="HIRA-interacting protein 3">
    <location>
        <begin position="1"/>
        <end position="601"/>
    </location>
</feature>
<feature type="region of interest" description="Disordered" evidence="2">
    <location>
        <begin position="60"/>
        <end position="469"/>
    </location>
</feature>
<feature type="region of interest" description="Interaction with the histone H2A-H2B complex" evidence="1">
    <location>
        <begin position="429"/>
        <end position="572"/>
    </location>
</feature>
<feature type="region of interest" description="Disordered" evidence="2">
    <location>
        <begin position="546"/>
        <end position="601"/>
    </location>
</feature>
<feature type="compositionally biased region" description="Basic and acidic residues" evidence="2">
    <location>
        <begin position="66"/>
        <end position="76"/>
    </location>
</feature>
<feature type="compositionally biased region" description="Low complexity" evidence="2">
    <location>
        <begin position="97"/>
        <end position="113"/>
    </location>
</feature>
<feature type="compositionally biased region" description="Basic residues" evidence="2">
    <location>
        <begin position="117"/>
        <end position="129"/>
    </location>
</feature>
<feature type="compositionally biased region" description="Basic and acidic residues" evidence="2">
    <location>
        <begin position="130"/>
        <end position="149"/>
    </location>
</feature>
<feature type="compositionally biased region" description="Basic and acidic residues" evidence="2">
    <location>
        <begin position="186"/>
        <end position="205"/>
    </location>
</feature>
<feature type="compositionally biased region" description="Basic and acidic residues" evidence="2">
    <location>
        <begin position="238"/>
        <end position="264"/>
    </location>
</feature>
<feature type="compositionally biased region" description="Basic and acidic residues" evidence="2">
    <location>
        <begin position="313"/>
        <end position="324"/>
    </location>
</feature>
<feature type="compositionally biased region" description="Polar residues" evidence="2">
    <location>
        <begin position="347"/>
        <end position="378"/>
    </location>
</feature>
<feature type="compositionally biased region" description="Low complexity" evidence="2">
    <location>
        <begin position="379"/>
        <end position="388"/>
    </location>
</feature>
<feature type="compositionally biased region" description="Low complexity" evidence="2">
    <location>
        <begin position="413"/>
        <end position="432"/>
    </location>
</feature>
<feature type="compositionally biased region" description="Polar residues" evidence="2">
    <location>
        <begin position="556"/>
        <end position="566"/>
    </location>
</feature>
<feature type="compositionally biased region" description="Basic and acidic residues" evidence="2">
    <location>
        <begin position="568"/>
        <end position="580"/>
    </location>
</feature>
<feature type="modified residue" description="Phosphoserine" evidence="1">
    <location>
        <position position="85"/>
    </location>
</feature>
<feature type="modified residue" description="Phosphoserine" evidence="1">
    <location>
        <position position="96"/>
    </location>
</feature>
<feature type="modified residue" description="Phosphoserine" evidence="1">
    <location>
        <position position="98"/>
    </location>
</feature>
<feature type="modified residue" description="Phosphoserine" evidence="10">
    <location>
        <position position="134"/>
    </location>
</feature>
<feature type="modified residue" description="Phosphothreonine" evidence="10">
    <location>
        <position position="135"/>
    </location>
</feature>
<feature type="modified residue" description="Phosphothreonine" evidence="8 10">
    <location>
        <position position="141"/>
    </location>
</feature>
<feature type="modified residue" description="Phosphoserine" evidence="10">
    <location>
        <position position="152"/>
    </location>
</feature>
<feature type="modified residue" description="Phosphoserine" evidence="10">
    <location>
        <position position="153"/>
    </location>
</feature>
<feature type="modified residue" description="Phosphoserine" evidence="10">
    <location>
        <position position="163"/>
    </location>
</feature>
<feature type="modified residue" description="Phosphothreonine" evidence="10">
    <location>
        <position position="167"/>
    </location>
</feature>
<feature type="modified residue" description="Phosphoserine" evidence="9">
    <location>
        <position position="205"/>
    </location>
</feature>
<feature type="modified residue" description="Phosphoserine" evidence="9">
    <location>
        <position position="207"/>
    </location>
</feature>
<feature type="modified residue" description="Phosphoserine" evidence="9">
    <location>
        <position position="208"/>
    </location>
</feature>
<feature type="modified residue" description="Phosphoserine" evidence="8 10">
    <location>
        <position position="231"/>
    </location>
</feature>
<feature type="modified residue" description="Phosphoserine" evidence="8 10">
    <location>
        <position position="234"/>
    </location>
</feature>
<feature type="modified residue" description="Phosphoserine" evidence="10">
    <location>
        <position position="238"/>
    </location>
</feature>
<feature type="modified residue" description="Phosphoserine" evidence="1">
    <location>
        <position position="313"/>
    </location>
</feature>
<feature type="modified residue" description="Phosphoserine" evidence="1">
    <location>
        <position position="359"/>
    </location>
</feature>
<feature type="modified residue" description="Phosphoserine" evidence="1">
    <location>
        <position position="360"/>
    </location>
</feature>
<feature type="modified residue" description="Phosphoserine" evidence="1">
    <location>
        <position position="384"/>
    </location>
</feature>
<feature type="modified residue" description="Phosphoserine" evidence="10">
    <location>
        <position position="389"/>
    </location>
</feature>
<feature type="modified residue" description="Phosphothreonine" evidence="10">
    <location>
        <position position="391"/>
    </location>
</feature>
<feature type="modified residue" description="Phosphoserine" evidence="1">
    <location>
        <position position="396"/>
    </location>
</feature>
<feature type="modified residue" description="Phosphoserine" evidence="1">
    <location>
        <position position="398"/>
    </location>
</feature>
<feature type="modified residue" description="Phosphoserine" evidence="10">
    <location>
        <position position="564"/>
    </location>
</feature>
<feature type="modified residue" description="Phosphoserine" evidence="10">
    <location>
        <position position="575"/>
    </location>
</feature>
<feature type="modified residue" description="Phosphoserine" evidence="1">
    <location>
        <position position="595"/>
    </location>
</feature>
<feature type="modified residue" description="Phosphoserine" evidence="1">
    <location>
        <position position="596"/>
    </location>
</feature>
<feature type="modified residue" description="Phosphoserine" evidence="1">
    <location>
        <position position="600"/>
    </location>
</feature>
<accession>Q8BLH7</accession>
<accession>Q3TSF3</accession>
<sequence length="601" mass="65215">MAPGDEMRKFTRSFFRACPDLSSVTHAIVRQKFLIHVGRDHLEPEEKQALKRLVEEELPKMQADAGTREGKPDFIKVKRSPAPCSDPKKKRFRFNSESESSSSPSSPDGSGPSTKNRTTKKTCLRRALKKAVESTDEDHQTDLDAKMGLEESSEGEAEGSVRSGKVTEEEEDMKQEQKGQVRKQAGAKDKQVPLKADRKQVREESGSSEEEAVLQRAKVEGSTGANCQEESEESGEESPAKKKELSEPRSRSNRAERTARERKSYKQKSRPGRPTGGLRDSEAEKEGGTVGSGDSSEEGEAEKEGGTVGSGDSSEKGEAEKEEGTVGSGDSSEEGEEHSVKRKSKVRTQTESGRRQNTSSRDDSNSTQEQAAAQGTTKSGSLGSSNGDSDTEREVSDSQAGQNTKEERKSRSSNKSSKNGQARSCSSSSDSSPEPTGQKGKARSSSSSSDSGPEPTGRKAASRCGEDHPAVARLKRYIRACGAHRNYKKLLGSCSSHKARLSVLRAELEALGMKGNPSLEKCRALKLQREEAAEVAALDVANIISSTGRPRRRNAWNPSGEGTSPGETYRRTLDSEEEQPRQAPPDWSHMRDIISSDGDSS</sequence>
<gene>
    <name evidence="7" type="primary">Hirip3</name>
</gene>
<protein>
    <recommendedName>
        <fullName>HIRA-interacting protein 3</fullName>
    </recommendedName>
</protein>